<organism>
    <name type="scientific">Clostridium botulinum (strain Loch Maree / Type A3)</name>
    <dbReference type="NCBI Taxonomy" id="498214"/>
    <lineage>
        <taxon>Bacteria</taxon>
        <taxon>Bacillati</taxon>
        <taxon>Bacillota</taxon>
        <taxon>Clostridia</taxon>
        <taxon>Eubacteriales</taxon>
        <taxon>Clostridiaceae</taxon>
        <taxon>Clostridium</taxon>
    </lineage>
</organism>
<feature type="chain" id="PRO_1000126225" description="Probable 2-phosphosulfolactate phosphatase">
    <location>
        <begin position="1"/>
        <end position="239"/>
    </location>
</feature>
<accession>B1KTF5</accession>
<comment type="catalytic activity">
    <reaction evidence="1">
        <text>(2R)-O-phospho-3-sulfolactate + H2O = (2R)-3-sulfolactate + phosphate</text>
        <dbReference type="Rhea" id="RHEA:23416"/>
        <dbReference type="ChEBI" id="CHEBI:15377"/>
        <dbReference type="ChEBI" id="CHEBI:15597"/>
        <dbReference type="ChEBI" id="CHEBI:43474"/>
        <dbReference type="ChEBI" id="CHEBI:58738"/>
        <dbReference type="EC" id="3.1.3.71"/>
    </reaction>
</comment>
<comment type="cofactor">
    <cofactor evidence="1">
        <name>Mg(2+)</name>
        <dbReference type="ChEBI" id="CHEBI:18420"/>
    </cofactor>
</comment>
<comment type="similarity">
    <text evidence="1">Belongs to the ComB family.</text>
</comment>
<dbReference type="EC" id="3.1.3.71" evidence="1"/>
<dbReference type="EMBL" id="CP000962">
    <property type="protein sequence ID" value="ACA57100.1"/>
    <property type="molecule type" value="Genomic_DNA"/>
</dbReference>
<dbReference type="RefSeq" id="WP_012344887.1">
    <property type="nucleotide sequence ID" value="NC_010520.1"/>
</dbReference>
<dbReference type="SMR" id="B1KTF5"/>
<dbReference type="KEGG" id="cbl:CLK_3023"/>
<dbReference type="HOGENOM" id="CLU_070028_0_0_9"/>
<dbReference type="GO" id="GO:0050532">
    <property type="term" value="F:2-phosphosulfolactate phosphatase activity"/>
    <property type="evidence" value="ECO:0007669"/>
    <property type="project" value="UniProtKB-UniRule"/>
</dbReference>
<dbReference type="GO" id="GO:0000287">
    <property type="term" value="F:magnesium ion binding"/>
    <property type="evidence" value="ECO:0007669"/>
    <property type="project" value="UniProtKB-UniRule"/>
</dbReference>
<dbReference type="GO" id="GO:0050545">
    <property type="term" value="F:sulfopyruvate decarboxylase activity"/>
    <property type="evidence" value="ECO:0007669"/>
    <property type="project" value="TreeGrafter"/>
</dbReference>
<dbReference type="FunFam" id="3.90.1560.10:FF:000001">
    <property type="entry name" value="Probable 2-phosphosulfolactate phosphatase"/>
    <property type="match status" value="1"/>
</dbReference>
<dbReference type="Gene3D" id="3.90.1560.10">
    <property type="entry name" value="ComB-like"/>
    <property type="match status" value="1"/>
</dbReference>
<dbReference type="HAMAP" id="MF_00490">
    <property type="entry name" value="ComB"/>
    <property type="match status" value="1"/>
</dbReference>
<dbReference type="InterPro" id="IPR005238">
    <property type="entry name" value="ComB-like"/>
</dbReference>
<dbReference type="InterPro" id="IPR036702">
    <property type="entry name" value="ComB-like_sf"/>
</dbReference>
<dbReference type="NCBIfam" id="NF002052">
    <property type="entry name" value="PRK00886.1-1"/>
    <property type="match status" value="1"/>
</dbReference>
<dbReference type="NCBIfam" id="NF002055">
    <property type="entry name" value="PRK00886.1-4"/>
    <property type="match status" value="1"/>
</dbReference>
<dbReference type="PANTHER" id="PTHR37311">
    <property type="entry name" value="2-PHOSPHOSULFOLACTATE PHOSPHATASE-RELATED"/>
    <property type="match status" value="1"/>
</dbReference>
<dbReference type="PANTHER" id="PTHR37311:SF1">
    <property type="entry name" value="2-PHOSPHOSULFOLACTATE PHOSPHATASE-RELATED"/>
    <property type="match status" value="1"/>
</dbReference>
<dbReference type="Pfam" id="PF04029">
    <property type="entry name" value="2-ph_phosp"/>
    <property type="match status" value="1"/>
</dbReference>
<dbReference type="SUPFAM" id="SSF142823">
    <property type="entry name" value="ComB-like"/>
    <property type="match status" value="1"/>
</dbReference>
<protein>
    <recommendedName>
        <fullName evidence="1">Probable 2-phosphosulfolactate phosphatase</fullName>
        <ecNumber evidence="1">3.1.3.71</ecNumber>
    </recommendedName>
</protein>
<sequence>MNIDIVISADHIDEKRLIKKTVIIIDILRATSVITTAINNGCKKVIPVLTVEEAKDIAKNSKEDIILGGERNALKIDGFNFSNSPLEYTKKYVEGKTVVLSTTNGTRAINNSFNAKTILISALINSKATAKAIDKLNEDLIIINSGTNGQFSIDDFICSGYLIDCLYNIRKDLELSDIAKTAHYIYTNNKDIESFVKKATHYSRLKSLNLEKDLEYCFQKDIIGVVPQYKDGYIIKSNI</sequence>
<proteinExistence type="inferred from homology"/>
<name>COMB_CLOBM</name>
<keyword id="KW-0378">Hydrolase</keyword>
<keyword id="KW-0460">Magnesium</keyword>
<gene>
    <name evidence="1" type="primary">comB</name>
    <name type="ordered locus">CLK_3023</name>
</gene>
<evidence type="ECO:0000255" key="1">
    <source>
        <dbReference type="HAMAP-Rule" id="MF_00490"/>
    </source>
</evidence>
<reference key="1">
    <citation type="journal article" date="2007" name="PLoS ONE">
        <title>Analysis of the neurotoxin complex genes in Clostridium botulinum A1-A4 and B1 strains: BoNT/A3, /Ba4 and /B1 clusters are located within plasmids.</title>
        <authorList>
            <person name="Smith T.J."/>
            <person name="Hill K.K."/>
            <person name="Foley B.T."/>
            <person name="Detter J.C."/>
            <person name="Munk A.C."/>
            <person name="Bruce D.C."/>
            <person name="Doggett N.A."/>
            <person name="Smith L.A."/>
            <person name="Marks J.D."/>
            <person name="Xie G."/>
            <person name="Brettin T.S."/>
        </authorList>
    </citation>
    <scope>NUCLEOTIDE SEQUENCE [LARGE SCALE GENOMIC DNA]</scope>
    <source>
        <strain>Loch Maree / Type A3</strain>
    </source>
</reference>